<accession>A3PI87</accession>
<evidence type="ECO:0000255" key="1">
    <source>
        <dbReference type="HAMAP-Rule" id="MF_00457"/>
    </source>
</evidence>
<keyword id="KW-0378">Hydrolase</keyword>
<sequence length="230" mass="24904">MKITWLGHSGFRIAIEQAVLLVDPWLTGNPLFPADRREEALAGATHILITHGHGDHTGDTVAIAKERGLPVVGIYDLVTWLQEKEGIDGIGFNKGGTVTLGGARVTMVQATHSSSMSGEAGPIYTGTESGYMIAGEGHVIYLSGDTDIMADMGWMGEYHRPDVGILSAGGHFTMDMKRAAFAARRYFDFRTVIPCHYRTFPLLEQSAEALKEGLPGVEVIEPQVLVPIEI</sequence>
<gene>
    <name type="ordered locus">Rsph17029_0942</name>
</gene>
<organism>
    <name type="scientific">Cereibacter sphaeroides (strain ATCC 17029 / ATH 2.4.9)</name>
    <name type="common">Rhodobacter sphaeroides</name>
    <dbReference type="NCBI Taxonomy" id="349101"/>
    <lineage>
        <taxon>Bacteria</taxon>
        <taxon>Pseudomonadati</taxon>
        <taxon>Pseudomonadota</taxon>
        <taxon>Alphaproteobacteria</taxon>
        <taxon>Rhodobacterales</taxon>
        <taxon>Paracoccaceae</taxon>
        <taxon>Cereibacter</taxon>
    </lineage>
</organism>
<name>Y942_CERS1</name>
<proteinExistence type="inferred from homology"/>
<comment type="similarity">
    <text evidence="1">Belongs to the UPF0173 family.</text>
</comment>
<dbReference type="EMBL" id="CP000577">
    <property type="protein sequence ID" value="ABN76053.1"/>
    <property type="molecule type" value="Genomic_DNA"/>
</dbReference>
<dbReference type="RefSeq" id="WP_011840704.1">
    <property type="nucleotide sequence ID" value="NC_009049.1"/>
</dbReference>
<dbReference type="SMR" id="A3PI87"/>
<dbReference type="KEGG" id="rsh:Rsph17029_0942"/>
<dbReference type="HOGENOM" id="CLU_070010_4_0_5"/>
<dbReference type="GO" id="GO:0016787">
    <property type="term" value="F:hydrolase activity"/>
    <property type="evidence" value="ECO:0007669"/>
    <property type="project" value="UniProtKB-UniRule"/>
</dbReference>
<dbReference type="Gene3D" id="3.60.15.10">
    <property type="entry name" value="Ribonuclease Z/Hydroxyacylglutathione hydrolase-like"/>
    <property type="match status" value="1"/>
</dbReference>
<dbReference type="HAMAP" id="MF_00457">
    <property type="entry name" value="UPF0173"/>
    <property type="match status" value="1"/>
</dbReference>
<dbReference type="InterPro" id="IPR001279">
    <property type="entry name" value="Metallo-B-lactamas"/>
</dbReference>
<dbReference type="InterPro" id="IPR036866">
    <property type="entry name" value="RibonucZ/Hydroxyglut_hydro"/>
</dbReference>
<dbReference type="InterPro" id="IPR022877">
    <property type="entry name" value="UPF0173"/>
</dbReference>
<dbReference type="InterPro" id="IPR050114">
    <property type="entry name" value="UPF0173_UPF0282_UlaG_hydrolase"/>
</dbReference>
<dbReference type="NCBIfam" id="NF001911">
    <property type="entry name" value="PRK00685.1"/>
    <property type="match status" value="1"/>
</dbReference>
<dbReference type="PANTHER" id="PTHR43546:SF3">
    <property type="entry name" value="UPF0173 METAL-DEPENDENT HYDROLASE MJ1163"/>
    <property type="match status" value="1"/>
</dbReference>
<dbReference type="PANTHER" id="PTHR43546">
    <property type="entry name" value="UPF0173 METAL-DEPENDENT HYDROLASE MJ1163-RELATED"/>
    <property type="match status" value="1"/>
</dbReference>
<dbReference type="Pfam" id="PF12706">
    <property type="entry name" value="Lactamase_B_2"/>
    <property type="match status" value="1"/>
</dbReference>
<dbReference type="SMART" id="SM00849">
    <property type="entry name" value="Lactamase_B"/>
    <property type="match status" value="1"/>
</dbReference>
<dbReference type="SUPFAM" id="SSF56281">
    <property type="entry name" value="Metallo-hydrolase/oxidoreductase"/>
    <property type="match status" value="1"/>
</dbReference>
<reference key="1">
    <citation type="submission" date="2007-02" db="EMBL/GenBank/DDBJ databases">
        <title>Complete sequence of chromosome 1 of Rhodobacter sphaeroides ATCC 17029.</title>
        <authorList>
            <person name="Copeland A."/>
            <person name="Lucas S."/>
            <person name="Lapidus A."/>
            <person name="Barry K."/>
            <person name="Detter J.C."/>
            <person name="Glavina del Rio T."/>
            <person name="Hammon N."/>
            <person name="Israni S."/>
            <person name="Dalin E."/>
            <person name="Tice H."/>
            <person name="Pitluck S."/>
            <person name="Kiss H."/>
            <person name="Brettin T."/>
            <person name="Bruce D."/>
            <person name="Han C."/>
            <person name="Tapia R."/>
            <person name="Gilna P."/>
            <person name="Schmutz J."/>
            <person name="Larimer F."/>
            <person name="Land M."/>
            <person name="Hauser L."/>
            <person name="Kyrpides N."/>
            <person name="Mikhailova N."/>
            <person name="Richardson P."/>
            <person name="Mackenzie C."/>
            <person name="Choudhary M."/>
            <person name="Donohue T.J."/>
            <person name="Kaplan S."/>
        </authorList>
    </citation>
    <scope>NUCLEOTIDE SEQUENCE [LARGE SCALE GENOMIC DNA]</scope>
    <source>
        <strain>ATCC 17029 / ATH 2.4.9</strain>
    </source>
</reference>
<feature type="chain" id="PRO_0000367209" description="UPF0173 metal-dependent hydrolase Rsph17029_0942">
    <location>
        <begin position="1"/>
        <end position="230"/>
    </location>
</feature>
<protein>
    <recommendedName>
        <fullName evidence="1">UPF0173 metal-dependent hydrolase Rsph17029_0942</fullName>
    </recommendedName>
</protein>